<name>DTD_HISS1</name>
<organism>
    <name type="scientific">Histophilus somni (strain 129Pt)</name>
    <name type="common">Haemophilus somnus</name>
    <dbReference type="NCBI Taxonomy" id="205914"/>
    <lineage>
        <taxon>Bacteria</taxon>
        <taxon>Pseudomonadati</taxon>
        <taxon>Pseudomonadota</taxon>
        <taxon>Gammaproteobacteria</taxon>
        <taxon>Pasteurellales</taxon>
        <taxon>Pasteurellaceae</taxon>
        <taxon>Histophilus</taxon>
    </lineage>
</organism>
<accession>Q0I2T9</accession>
<proteinExistence type="inferred from homology"/>
<evidence type="ECO:0000255" key="1">
    <source>
        <dbReference type="HAMAP-Rule" id="MF_00518"/>
    </source>
</evidence>
<gene>
    <name evidence="1" type="primary">dtd</name>
    <name type="ordered locus">HS_0694</name>
</gene>
<keyword id="KW-0963">Cytoplasm</keyword>
<keyword id="KW-0378">Hydrolase</keyword>
<keyword id="KW-0694">RNA-binding</keyword>
<keyword id="KW-0820">tRNA-binding</keyword>
<feature type="chain" id="PRO_1000050838" description="D-aminoacyl-tRNA deacylase">
    <location>
        <begin position="1"/>
        <end position="144"/>
    </location>
</feature>
<feature type="short sequence motif" description="Gly-cisPro motif, important for rejection of L-amino acids" evidence="1">
    <location>
        <begin position="136"/>
        <end position="137"/>
    </location>
</feature>
<protein>
    <recommendedName>
        <fullName evidence="1">D-aminoacyl-tRNA deacylase</fullName>
        <shortName evidence="1">DTD</shortName>
        <ecNumber evidence="1">3.1.1.96</ecNumber>
    </recommendedName>
    <alternativeName>
        <fullName evidence="1">Gly-tRNA(Ala) deacylase</fullName>
    </alternativeName>
</protein>
<dbReference type="EC" id="3.1.1.96" evidence="1"/>
<dbReference type="EMBL" id="CP000436">
    <property type="protein sequence ID" value="ABI24971.1"/>
    <property type="molecule type" value="Genomic_DNA"/>
</dbReference>
<dbReference type="SMR" id="Q0I2T9"/>
<dbReference type="KEGG" id="hso:HS_0694"/>
<dbReference type="eggNOG" id="COG1490">
    <property type="taxonomic scope" value="Bacteria"/>
</dbReference>
<dbReference type="HOGENOM" id="CLU_076901_1_1_6"/>
<dbReference type="GO" id="GO:0005737">
    <property type="term" value="C:cytoplasm"/>
    <property type="evidence" value="ECO:0007669"/>
    <property type="project" value="UniProtKB-SubCell"/>
</dbReference>
<dbReference type="GO" id="GO:0051500">
    <property type="term" value="F:D-tyrosyl-tRNA(Tyr) deacylase activity"/>
    <property type="evidence" value="ECO:0007669"/>
    <property type="project" value="TreeGrafter"/>
</dbReference>
<dbReference type="GO" id="GO:0106026">
    <property type="term" value="F:Gly-tRNA(Ala) deacylase activity"/>
    <property type="evidence" value="ECO:0007669"/>
    <property type="project" value="UniProtKB-UniRule"/>
</dbReference>
<dbReference type="GO" id="GO:0043908">
    <property type="term" value="F:Ser(Gly)-tRNA(Ala) hydrolase activity"/>
    <property type="evidence" value="ECO:0007669"/>
    <property type="project" value="UniProtKB-UniRule"/>
</dbReference>
<dbReference type="GO" id="GO:0000049">
    <property type="term" value="F:tRNA binding"/>
    <property type="evidence" value="ECO:0007669"/>
    <property type="project" value="UniProtKB-UniRule"/>
</dbReference>
<dbReference type="GO" id="GO:0019478">
    <property type="term" value="P:D-amino acid catabolic process"/>
    <property type="evidence" value="ECO:0007669"/>
    <property type="project" value="UniProtKB-UniRule"/>
</dbReference>
<dbReference type="CDD" id="cd00563">
    <property type="entry name" value="Dtyr_deacylase"/>
    <property type="match status" value="1"/>
</dbReference>
<dbReference type="FunFam" id="3.50.80.10:FF:000001">
    <property type="entry name" value="D-aminoacyl-tRNA deacylase"/>
    <property type="match status" value="1"/>
</dbReference>
<dbReference type="Gene3D" id="3.50.80.10">
    <property type="entry name" value="D-tyrosyl-tRNA(Tyr) deacylase"/>
    <property type="match status" value="1"/>
</dbReference>
<dbReference type="HAMAP" id="MF_00518">
    <property type="entry name" value="Deacylase_Dtd"/>
    <property type="match status" value="1"/>
</dbReference>
<dbReference type="InterPro" id="IPR003732">
    <property type="entry name" value="Daa-tRNA_deacyls_DTD"/>
</dbReference>
<dbReference type="InterPro" id="IPR023509">
    <property type="entry name" value="DTD-like_sf"/>
</dbReference>
<dbReference type="NCBIfam" id="TIGR00256">
    <property type="entry name" value="D-aminoacyl-tRNA deacylase"/>
    <property type="match status" value="1"/>
</dbReference>
<dbReference type="PANTHER" id="PTHR10472:SF5">
    <property type="entry name" value="D-AMINOACYL-TRNA DEACYLASE 1"/>
    <property type="match status" value="1"/>
</dbReference>
<dbReference type="PANTHER" id="PTHR10472">
    <property type="entry name" value="D-TYROSYL-TRNA TYR DEACYLASE"/>
    <property type="match status" value="1"/>
</dbReference>
<dbReference type="Pfam" id="PF02580">
    <property type="entry name" value="Tyr_Deacylase"/>
    <property type="match status" value="1"/>
</dbReference>
<dbReference type="SUPFAM" id="SSF69500">
    <property type="entry name" value="DTD-like"/>
    <property type="match status" value="1"/>
</dbReference>
<comment type="function">
    <text evidence="1">An aminoacyl-tRNA editing enzyme that deacylates mischarged D-aminoacyl-tRNAs. Also deacylates mischarged glycyl-tRNA(Ala), protecting cells against glycine mischarging by AlaRS. Acts via tRNA-based rather than protein-based catalysis; rejects L-amino acids rather than detecting D-amino acids in the active site. By recycling D-aminoacyl-tRNA to D-amino acids and free tRNA molecules, this enzyme counteracts the toxicity associated with the formation of D-aminoacyl-tRNA entities in vivo and helps enforce protein L-homochirality.</text>
</comment>
<comment type="catalytic activity">
    <reaction evidence="1">
        <text>glycyl-tRNA(Ala) + H2O = tRNA(Ala) + glycine + H(+)</text>
        <dbReference type="Rhea" id="RHEA:53744"/>
        <dbReference type="Rhea" id="RHEA-COMP:9657"/>
        <dbReference type="Rhea" id="RHEA-COMP:13640"/>
        <dbReference type="ChEBI" id="CHEBI:15377"/>
        <dbReference type="ChEBI" id="CHEBI:15378"/>
        <dbReference type="ChEBI" id="CHEBI:57305"/>
        <dbReference type="ChEBI" id="CHEBI:78442"/>
        <dbReference type="ChEBI" id="CHEBI:78522"/>
        <dbReference type="EC" id="3.1.1.96"/>
    </reaction>
</comment>
<comment type="catalytic activity">
    <reaction evidence="1">
        <text>a D-aminoacyl-tRNA + H2O = a tRNA + a D-alpha-amino acid + H(+)</text>
        <dbReference type="Rhea" id="RHEA:13953"/>
        <dbReference type="Rhea" id="RHEA-COMP:10123"/>
        <dbReference type="Rhea" id="RHEA-COMP:10124"/>
        <dbReference type="ChEBI" id="CHEBI:15377"/>
        <dbReference type="ChEBI" id="CHEBI:15378"/>
        <dbReference type="ChEBI" id="CHEBI:59871"/>
        <dbReference type="ChEBI" id="CHEBI:78442"/>
        <dbReference type="ChEBI" id="CHEBI:79333"/>
        <dbReference type="EC" id="3.1.1.96"/>
    </reaction>
</comment>
<comment type="subunit">
    <text evidence="1">Homodimer.</text>
</comment>
<comment type="subcellular location">
    <subcellularLocation>
        <location evidence="1">Cytoplasm</location>
    </subcellularLocation>
</comment>
<comment type="domain">
    <text evidence="1">A Gly-cisPro motif from one monomer fits into the active site of the other monomer to allow specific chiral rejection of L-amino acids.</text>
</comment>
<comment type="similarity">
    <text evidence="1">Belongs to the DTD family.</text>
</comment>
<sequence length="144" mass="15869">MIALIQRVSHAKVEVGQNIVGQIGQGLLVLLGVEKDDDRSKADKLAEKVLNYRIFTDENGKMNLNLQQIGGEILIVSQFTLAADTQKGLRPSFSKGADPELAEKLYQYFSQKCAEKVRVANGQFAADMQVSLTNDGPVTFWLNV</sequence>
<reference key="1">
    <citation type="journal article" date="2007" name="J. Bacteriol.">
        <title>Complete genome sequence of Haemophilus somnus (Histophilus somni) strain 129Pt and comparison to Haemophilus ducreyi 35000HP and Haemophilus influenzae Rd.</title>
        <authorList>
            <person name="Challacombe J.F."/>
            <person name="Duncan A.J."/>
            <person name="Brettin T.S."/>
            <person name="Bruce D."/>
            <person name="Chertkov O."/>
            <person name="Detter J.C."/>
            <person name="Han C.S."/>
            <person name="Misra M."/>
            <person name="Richardson P."/>
            <person name="Tapia R."/>
            <person name="Thayer N."/>
            <person name="Xie G."/>
            <person name="Inzana T.J."/>
        </authorList>
    </citation>
    <scope>NUCLEOTIDE SEQUENCE [LARGE SCALE GENOMIC DNA]</scope>
    <source>
        <strain>129Pt</strain>
    </source>
</reference>